<name>GUAA_SPIKU</name>
<evidence type="ECO:0000255" key="1">
    <source>
        <dbReference type="HAMAP-Rule" id="MF_00344"/>
    </source>
</evidence>
<keyword id="KW-0067">ATP-binding</keyword>
<keyword id="KW-0315">Glutamine amidotransferase</keyword>
<keyword id="KW-0332">GMP biosynthesis</keyword>
<keyword id="KW-0436">Ligase</keyword>
<keyword id="KW-0547">Nucleotide-binding</keyword>
<keyword id="KW-0658">Purine biosynthesis</keyword>
<gene>
    <name evidence="1" type="primary">guaA</name>
</gene>
<protein>
    <recommendedName>
        <fullName evidence="1">GMP synthase [glutamine-hydrolyzing]</fullName>
        <ecNumber evidence="1">6.3.5.2</ecNumber>
    </recommendedName>
    <alternativeName>
        <fullName evidence="1">GMP synthetase</fullName>
    </alternativeName>
    <alternativeName>
        <fullName evidence="1">Glutamine amidotransferase</fullName>
    </alternativeName>
</protein>
<sequence>MKTTNKIIILDFGSQYTQLIARRIRDLEVYCEVWPYNTALEKIKTTSMKGIILSGGPASVYEEDAFLIDKQLFELKVPVLGICYGMQIISHLHEGTVQRATKQEFGFSELIIDNQEDLFANIPVKSQVWMSHADYIEGMPTNFIQIAHSENSISAIKHSEKKIYGLQFHPEVTHTLIGQQLLSNFVFNICGCQPKWKITEFISAAITEIKNKVGTDNVVLALSGGVDSSVCAVLLHKAIGKQLTCIFVDTGLLRQNSGWNDLQKFQEKFKLNIIKINAQERFLTALKGVTNPEEKRKIIGNLFIEIFNEEAIKIQNVKWLGQGTIYPDVIESVSVKGPSATIKSHHNVGGLPKDLPFQLIEPLRELFKDEVRRTGEALGIDFKFVYKHPFPGPGLAVRIIGEITAEKIALLQAADQIFIDELYQANLYDQVAQAFVVLLPVQSVGVMGDVRTYGYTAVVRSVDTTDFMTANWSRLPFELLEKVSARIVSEVHGINRITYDITSKPPGTIEWE</sequence>
<proteinExistence type="inferred from homology"/>
<accession>P60502</accession>
<reference key="1">
    <citation type="journal article" date="2003" name="Mol. Genet. Genomics">
        <title>Gene content and organization of an 85-kb DNA segment from the genome of the phytopathogenic mollicute Spiroplasma kunkelii.</title>
        <authorList>
            <person name="Zhao Y."/>
            <person name="Hammond R.W."/>
            <person name="Jomantiene R."/>
            <person name="Dally E.L."/>
            <person name="Lee I.-M."/>
            <person name="Jia H."/>
            <person name="Wu H."/>
            <person name="Lin S."/>
            <person name="Zhang P."/>
            <person name="Kenton S."/>
            <person name="Najar F.Z."/>
            <person name="Hua A."/>
            <person name="Roe B.A."/>
            <person name="Fletcher J."/>
            <person name="Davis R.E."/>
        </authorList>
    </citation>
    <scope>NUCLEOTIDE SEQUENCE [GENOMIC DNA]</scope>
    <source>
        <strain>CR2-3x</strain>
    </source>
</reference>
<organism>
    <name type="scientific">Spiroplasma kunkelii</name>
    <dbReference type="NCBI Taxonomy" id="47834"/>
    <lineage>
        <taxon>Bacteria</taxon>
        <taxon>Bacillati</taxon>
        <taxon>Mycoplasmatota</taxon>
        <taxon>Mollicutes</taxon>
        <taxon>Entomoplasmatales</taxon>
        <taxon>Spiroplasmataceae</taxon>
        <taxon>Spiroplasma</taxon>
    </lineage>
</organism>
<feature type="chain" id="PRO_0000140174" description="GMP synthase [glutamine-hydrolyzing]">
    <location>
        <begin position="1"/>
        <end position="512"/>
    </location>
</feature>
<feature type="domain" description="Glutamine amidotransferase type-1" evidence="1">
    <location>
        <begin position="6"/>
        <end position="195"/>
    </location>
</feature>
<feature type="domain" description="GMPS ATP-PPase" evidence="1">
    <location>
        <begin position="196"/>
        <end position="387"/>
    </location>
</feature>
<feature type="active site" description="Nucleophile" evidence="1">
    <location>
        <position position="83"/>
    </location>
</feature>
<feature type="active site" evidence="1">
    <location>
        <position position="169"/>
    </location>
</feature>
<feature type="active site" evidence="1">
    <location>
        <position position="171"/>
    </location>
</feature>
<feature type="binding site" evidence="1">
    <location>
        <begin position="223"/>
        <end position="229"/>
    </location>
    <ligand>
        <name>ATP</name>
        <dbReference type="ChEBI" id="CHEBI:30616"/>
    </ligand>
</feature>
<dbReference type="EC" id="6.3.5.2" evidence="1"/>
<dbReference type="EMBL" id="AY198133">
    <property type="protein sequence ID" value="AAP58945.1"/>
    <property type="molecule type" value="Genomic_DNA"/>
</dbReference>
<dbReference type="SMR" id="P60502"/>
<dbReference type="UniPathway" id="UPA00189">
    <property type="reaction ID" value="UER00296"/>
</dbReference>
<dbReference type="GO" id="GO:0005829">
    <property type="term" value="C:cytosol"/>
    <property type="evidence" value="ECO:0007669"/>
    <property type="project" value="TreeGrafter"/>
</dbReference>
<dbReference type="GO" id="GO:0005524">
    <property type="term" value="F:ATP binding"/>
    <property type="evidence" value="ECO:0007669"/>
    <property type="project" value="UniProtKB-UniRule"/>
</dbReference>
<dbReference type="GO" id="GO:0003921">
    <property type="term" value="F:GMP synthase activity"/>
    <property type="evidence" value="ECO:0007669"/>
    <property type="project" value="InterPro"/>
</dbReference>
<dbReference type="CDD" id="cd01742">
    <property type="entry name" value="GATase1_GMP_Synthase"/>
    <property type="match status" value="1"/>
</dbReference>
<dbReference type="CDD" id="cd01997">
    <property type="entry name" value="GMP_synthase_C"/>
    <property type="match status" value="1"/>
</dbReference>
<dbReference type="FunFam" id="3.30.300.10:FF:000002">
    <property type="entry name" value="GMP synthase [glutamine-hydrolyzing]"/>
    <property type="match status" value="1"/>
</dbReference>
<dbReference type="FunFam" id="3.40.50.620:FF:000001">
    <property type="entry name" value="GMP synthase [glutamine-hydrolyzing]"/>
    <property type="match status" value="1"/>
</dbReference>
<dbReference type="FunFam" id="3.40.50.880:FF:000001">
    <property type="entry name" value="GMP synthase [glutamine-hydrolyzing]"/>
    <property type="match status" value="1"/>
</dbReference>
<dbReference type="Gene3D" id="3.30.300.10">
    <property type="match status" value="1"/>
</dbReference>
<dbReference type="Gene3D" id="3.40.50.880">
    <property type="match status" value="1"/>
</dbReference>
<dbReference type="Gene3D" id="3.40.50.620">
    <property type="entry name" value="HUPs"/>
    <property type="match status" value="1"/>
</dbReference>
<dbReference type="HAMAP" id="MF_00344">
    <property type="entry name" value="GMP_synthase"/>
    <property type="match status" value="1"/>
</dbReference>
<dbReference type="InterPro" id="IPR029062">
    <property type="entry name" value="Class_I_gatase-like"/>
</dbReference>
<dbReference type="InterPro" id="IPR017926">
    <property type="entry name" value="GATASE"/>
</dbReference>
<dbReference type="InterPro" id="IPR001674">
    <property type="entry name" value="GMP_synth_C"/>
</dbReference>
<dbReference type="InterPro" id="IPR004739">
    <property type="entry name" value="GMP_synth_GATase"/>
</dbReference>
<dbReference type="InterPro" id="IPR022955">
    <property type="entry name" value="GMP_synthase"/>
</dbReference>
<dbReference type="InterPro" id="IPR025777">
    <property type="entry name" value="GMPS_ATP_PPase_dom"/>
</dbReference>
<dbReference type="InterPro" id="IPR022310">
    <property type="entry name" value="NAD/GMP_synthase"/>
</dbReference>
<dbReference type="InterPro" id="IPR014729">
    <property type="entry name" value="Rossmann-like_a/b/a_fold"/>
</dbReference>
<dbReference type="NCBIfam" id="TIGR00884">
    <property type="entry name" value="guaA_Cterm"/>
    <property type="match status" value="1"/>
</dbReference>
<dbReference type="NCBIfam" id="TIGR00888">
    <property type="entry name" value="guaA_Nterm"/>
    <property type="match status" value="1"/>
</dbReference>
<dbReference type="NCBIfam" id="NF000848">
    <property type="entry name" value="PRK00074.1"/>
    <property type="match status" value="1"/>
</dbReference>
<dbReference type="PANTHER" id="PTHR11922:SF2">
    <property type="entry name" value="GMP SYNTHASE [GLUTAMINE-HYDROLYZING]"/>
    <property type="match status" value="1"/>
</dbReference>
<dbReference type="PANTHER" id="PTHR11922">
    <property type="entry name" value="GMP SYNTHASE-RELATED"/>
    <property type="match status" value="1"/>
</dbReference>
<dbReference type="Pfam" id="PF00117">
    <property type="entry name" value="GATase"/>
    <property type="match status" value="1"/>
</dbReference>
<dbReference type="Pfam" id="PF00958">
    <property type="entry name" value="GMP_synt_C"/>
    <property type="match status" value="1"/>
</dbReference>
<dbReference type="Pfam" id="PF02540">
    <property type="entry name" value="NAD_synthase"/>
    <property type="match status" value="1"/>
</dbReference>
<dbReference type="PRINTS" id="PR00097">
    <property type="entry name" value="ANTSNTHASEII"/>
</dbReference>
<dbReference type="PRINTS" id="PR00096">
    <property type="entry name" value="GATASE"/>
</dbReference>
<dbReference type="SUPFAM" id="SSF52402">
    <property type="entry name" value="Adenine nucleotide alpha hydrolases-like"/>
    <property type="match status" value="1"/>
</dbReference>
<dbReference type="SUPFAM" id="SSF52317">
    <property type="entry name" value="Class I glutamine amidotransferase-like"/>
    <property type="match status" value="1"/>
</dbReference>
<dbReference type="SUPFAM" id="SSF54810">
    <property type="entry name" value="GMP synthetase C-terminal dimerisation domain"/>
    <property type="match status" value="1"/>
</dbReference>
<dbReference type="PROSITE" id="PS51273">
    <property type="entry name" value="GATASE_TYPE_1"/>
    <property type="match status" value="1"/>
</dbReference>
<dbReference type="PROSITE" id="PS51553">
    <property type="entry name" value="GMPS_ATP_PPASE"/>
    <property type="match status" value="1"/>
</dbReference>
<comment type="function">
    <text evidence="1">Catalyzes the synthesis of GMP from XMP.</text>
</comment>
<comment type="catalytic activity">
    <reaction evidence="1">
        <text>XMP + L-glutamine + ATP + H2O = GMP + L-glutamate + AMP + diphosphate + 2 H(+)</text>
        <dbReference type="Rhea" id="RHEA:11680"/>
        <dbReference type="ChEBI" id="CHEBI:15377"/>
        <dbReference type="ChEBI" id="CHEBI:15378"/>
        <dbReference type="ChEBI" id="CHEBI:29985"/>
        <dbReference type="ChEBI" id="CHEBI:30616"/>
        <dbReference type="ChEBI" id="CHEBI:33019"/>
        <dbReference type="ChEBI" id="CHEBI:57464"/>
        <dbReference type="ChEBI" id="CHEBI:58115"/>
        <dbReference type="ChEBI" id="CHEBI:58359"/>
        <dbReference type="ChEBI" id="CHEBI:456215"/>
        <dbReference type="EC" id="6.3.5.2"/>
    </reaction>
</comment>
<comment type="pathway">
    <text evidence="1">Purine metabolism; GMP biosynthesis; GMP from XMP (L-Gln route): step 1/1.</text>
</comment>
<comment type="subunit">
    <text evidence="1">Homodimer.</text>
</comment>